<sequence>MSQKPLSDDEKFLFVDKNFVNNPLAQADWSAKKLVWVPSEKHGFEAASIKEEKGDEVTVELQENGKKVTLSKDDIQKMNPPKFSKVEDMAELTCLNEASVLHNLRERYFSGLIYTYSGLFCVVINPYKQLPIYSEKIIDMYKGKKRHEMPPHIYAIADTAYRSMLQDREDQSILCTGESGAGKTENTKKVIQYLAVVASSHKGKKDTSITQGPSFSYGELEKQLLQANPILEAFGNAKTVKNDNSSRFGKFIRINFDVTGYIVGANIETYLLEKSRAIRQAKDERTFHIFYYLIAGASEQMRNDLLLEGFNNYTFLSNGHVPIPAQQDDEMFQETLEAMTIMGFTEEEQTSILRVVSSVLQLGNIVFKKERNTDQASMPDNTAAQKVCHLMGINVTDFTRSILTPRIKVGRDVVQKAQTKEQADFAIEALAKAKFERLFRWILTRVNKALDKTKRQGASFLGILDIAGFEIFEINSFEQLCINYTNEKLQQLFNHTMFILEQEEYQREGIEWNFIDFGLDLQPCIELIERPTNPPGVLALLDEECWFPKATDTSFVEKLIQEQGNHAKFQKSKQLKDKTEFCILHYAGKVTYNASAWLTKNMDPLNDNVTSLLNQSSDKFVADLWKDVDRIVGLDQMAKMTESSLPSASKTKKGMFRTVGQLYKEQLTKLMTTLRNTNPNFVRCIIPNHEKRAGKLDAHLVLEQLRCNGVLEGIRICRQGFPNRIVFQEFRQRYEILAANAIPKGFMDGKQACILMIKALELDPNLYRIGQSKIFFRTGVLAHLEEERDLKITDVIIAFQAQCRGYLARKAFAKRQQQLTAMKVIQRNCAAYLKLRNWQWWRLFTKVKPLLQVTRQEEEMQAKDEELQRTKERQQKAEAELKELEQKHTQLCEEKNLLQEKLQAETELYAEAEEMRVRLAAKKQELEEILHEMEARIEEEEERSQQLQAEKKKMQQQMLDLEEQLEEEEAARQKLQLEKVTADGKIKKMEDDILIMEDQNNKLTKERKLLEERVSDLTTNLAEEEEKAKNLTKLKNKHESMISELEVRLKKEEKSRQELEKIKRKLEGESSDLHEQIAELQAQIAELKAQLAKKEEELQAALARLEDETSQKNNALKKIRELESHISDLQEDLESEKAARNKAEKQKRDLSEELEALKTELEDTLDTTATQQELRAKREQEVTVLKRALEEETRTHEAQVQEMRQKHTQAVEELTEQLEQFKRAKANLDKTKQTLEKDNADLANEIRSLSQAKQDVEHKKKKLEVQLQDLQSKYSDGERVRTELNEKVHKLQIEVENVTSLLNEAESKNIKLTKDVATLGSQLQDTQELLQEETRQKLNVTTKLRQLEDDKNSLQEQLDEEVEAKQNLERHISTLTIQLSDSKKKLQEFTATVETMEEGKKKLQREIESLTQQFEEKAASYDKLEKTKNRLQQELDDLVVDLDNQRQLVSNLEKKQKKFDQMLAEEKNISSKYADERDRAEAEAREKETKALSLARALEEALEAKEELERTNKMLKAEMEDLVSSKDDVGKNVHELEKSKRTLEQQVEEMKTQLEELEDELQAAEDAKLRLEVNMQAMKSQFERDLQARDEQNEEKRRQLLKQLHEHETELEDERKQRALAAAAKKKLEVDVKDLESQVDSANKAREEAIKQLRKLQAQMKDYQRDLDDARAAREEIFATARENEKKAKNLEAELIQLQEDLAAAERARKQADLEKEEMAEELASANSGRTSLQDEKRRLEARIAQLEEELDEEHSNIETMSDRMRKAVQQAEQLNNELATERATAQKNENARQQLERQNKELRSKLQEMEGAVKSKFKSTIAALEAKIASLEEQLEQEAREKQAAAKTLRQKDKKLKDALLQVEDERKQAEQYKDQAEKGNLRLKQLKRQLEEAEEESQRINANRRKLQRELDEATESNDALGREVAALKSKLRRGNEPVSFAPPRRSGGRRVIENATDGGEEEIDGRDGDFNGKASE</sequence>
<evidence type="ECO:0000255" key="1"/>
<evidence type="ECO:0000255" key="2">
    <source>
        <dbReference type="PROSITE-ProRule" id="PRU00116"/>
    </source>
</evidence>
<evidence type="ECO:0000255" key="3">
    <source>
        <dbReference type="PROSITE-ProRule" id="PRU00782"/>
    </source>
</evidence>
<evidence type="ECO:0000255" key="4">
    <source>
        <dbReference type="PROSITE-ProRule" id="PRU01190"/>
    </source>
</evidence>
<evidence type="ECO:0000256" key="5">
    <source>
        <dbReference type="SAM" id="MobiDB-lite"/>
    </source>
</evidence>
<evidence type="ECO:0000269" key="6">
    <source>
    </source>
</evidence>
<evidence type="ECO:0000305" key="7"/>
<evidence type="ECO:0007829" key="8">
    <source>
        <dbReference type="PDB" id="1BR1"/>
    </source>
</evidence>
<evidence type="ECO:0007829" key="9">
    <source>
        <dbReference type="PDB" id="1BR2"/>
    </source>
</evidence>
<evidence type="ECO:0007829" key="10">
    <source>
        <dbReference type="PDB" id="5M05"/>
    </source>
</evidence>
<evidence type="ECO:0007829" key="11">
    <source>
        <dbReference type="PDB" id="5T45"/>
    </source>
</evidence>
<evidence type="ECO:0007829" key="12">
    <source>
        <dbReference type="PDB" id="7MF3"/>
    </source>
</evidence>
<reference key="1">
    <citation type="journal article" date="1987" name="J. Mol. Biol.">
        <title>Complete primary structure of vertebrate smooth muscle myosin heavy chain deduced from its complementary DNA sequence. Implications on topography and function of myosin.</title>
        <authorList>
            <person name="Yanagisawa M."/>
            <person name="Hamada Y."/>
            <person name="Katsuragawa Y."/>
            <person name="Imamura M."/>
            <person name="Mikawa T."/>
            <person name="Masaki T."/>
        </authorList>
    </citation>
    <scope>NUCLEOTIDE SEQUENCE [MRNA]</scope>
</reference>
<reference key="2">
    <citation type="submission" date="1989-02" db="EMBL/GenBank/DDBJ databases">
        <authorList>
            <person name="Masaki T."/>
        </authorList>
    </citation>
    <scope>SEQUENCE REVISION</scope>
</reference>
<reference key="3">
    <citation type="journal article" date="1987" name="J. Biochem.">
        <title>Amino acid sequence of the amino-terminal 24 kDa fragment of the heavy chain of chicken gizzard myosin.</title>
        <authorList>
            <person name="Maita T."/>
            <person name="Onishi H."/>
            <person name="Yajima E."/>
            <person name="Matsuda G."/>
        </authorList>
    </citation>
    <scope>PROTEIN SEQUENCE OF 2-204</scope>
    <scope>METHYLATION AT LYS-128</scope>
</reference>
<reference key="4">
    <citation type="journal article" date="1990" name="J. Biol. Chem.">
        <title>Lys-65 and Glu-168 are the residues for carbodiimide-catalyzed cross-linking between the two heads of rigor smooth muscle heavy meromyosin.</title>
        <authorList>
            <person name="Onishi H."/>
            <person name="Maita T."/>
            <person name="Matsuda G."/>
            <person name="Fujiwara K."/>
        </authorList>
    </citation>
    <scope>PROTEIN SEQUENCE OF 54-64 AND 143-183</scope>
</reference>
<reference key="5">
    <citation type="journal article" date="1992" name="Biochemistry">
        <title>Stability and photochemical properties of vanadate-trapped nucleotide complexes of gizzard myosin in the 6S and 10S conformations: identification of an active-site serine.</title>
        <authorList>
            <person name="Cole D.G."/>
            <person name="Yount R.G."/>
        </authorList>
    </citation>
    <scope>PROTEIN SEQUENCE OF 169-183</scope>
</reference>
<reference key="6">
    <citation type="journal article" date="1986" name="J. Biochem.">
        <title>Amino acid sequence of the 203-residue fragment of the heavy chain of chicken gizzard myosin containing the SH1-type cysteine residue.</title>
        <authorList>
            <person name="Onishi H."/>
            <person name="Maita T."/>
            <person name="Miyanishi T."/>
            <person name="Watanabe S."/>
            <person name="Matsuda G."/>
        </authorList>
    </citation>
    <scope>PROTEIN SEQUENCE OF 653-855</scope>
</reference>
<reference key="7">
    <citation type="journal article" date="1998" name="Cell">
        <title>Crystal structure of a vertebrate smooth muscle myosin motor domain and its complex with the essential light chain: visualization of the pre-power stroke state.</title>
        <authorList>
            <person name="Dominguez R."/>
            <person name="Freyzon Y."/>
            <person name="Trybus K.M."/>
            <person name="Cohen C."/>
        </authorList>
    </citation>
    <scope>X-RAY CRYSTALLOGRAPHY (3.5 ANGSTROMS) OF 1-819</scope>
    <scope>SEQUENCE REVISION TO 205-216</scope>
</reference>
<protein>
    <recommendedName>
        <fullName>Myosin-11</fullName>
    </recommendedName>
    <alternativeName>
        <fullName>Myosin heavy chain 11</fullName>
    </alternativeName>
    <alternativeName>
        <fullName>Myosin heavy chain, gizzard smooth muscle</fullName>
    </alternativeName>
</protein>
<dbReference type="EMBL" id="X06546">
    <property type="protein sequence ID" value="CAA29793.1"/>
    <property type="molecule type" value="mRNA"/>
</dbReference>
<dbReference type="PIR" id="S03166">
    <property type="entry name" value="S03166"/>
</dbReference>
<dbReference type="RefSeq" id="NP_990605.3">
    <property type="nucleotide sequence ID" value="NM_205274.3"/>
</dbReference>
<dbReference type="PDB" id="1BR1">
    <property type="method" value="X-ray"/>
    <property type="resolution" value="3.50 A"/>
    <property type="chains" value="A/C/E/G=3-819"/>
</dbReference>
<dbReference type="PDB" id="1BR2">
    <property type="method" value="X-ray"/>
    <property type="resolution" value="2.90 A"/>
    <property type="chains" value="A/B/C/D/E/F=3-792"/>
</dbReference>
<dbReference type="PDB" id="1BR4">
    <property type="method" value="X-ray"/>
    <property type="resolution" value="3.62 A"/>
    <property type="chains" value="A/C/E/G=3-819"/>
</dbReference>
<dbReference type="PDB" id="1I84">
    <property type="method" value="EM"/>
    <property type="resolution" value="20.00 A"/>
    <property type="chains" value="S/V=2-1175"/>
</dbReference>
<dbReference type="PDB" id="3DTP">
    <property type="method" value="EM"/>
    <property type="resolution" value="20.00 A"/>
    <property type="chains" value="A/B=3-852"/>
</dbReference>
<dbReference type="PDB" id="3J04">
    <property type="method" value="EM"/>
    <property type="chains" value="A/D=2-910"/>
</dbReference>
<dbReference type="PDB" id="5M05">
    <property type="method" value="X-ray"/>
    <property type="resolution" value="2.67 A"/>
    <property type="chains" value="A=1-790"/>
</dbReference>
<dbReference type="PDB" id="5T45">
    <property type="method" value="X-ray"/>
    <property type="resolution" value="2.80 A"/>
    <property type="chains" value="A=1-790"/>
</dbReference>
<dbReference type="PDB" id="6BIH">
    <property type="method" value="EM"/>
    <property type="resolution" value="6.00 A"/>
    <property type="chains" value="H=1-790"/>
</dbReference>
<dbReference type="PDB" id="7MF3">
    <property type="method" value="EM"/>
    <property type="resolution" value="3.40 A"/>
    <property type="chains" value="A/B/G/H=2-1979"/>
</dbReference>
<dbReference type="PDB" id="8SYF">
    <property type="method" value="EM"/>
    <property type="resolution" value="19.00 A"/>
    <property type="chains" value="A/B=2-851"/>
</dbReference>
<dbReference type="PDBsum" id="1BR1"/>
<dbReference type="PDBsum" id="1BR2"/>
<dbReference type="PDBsum" id="1BR4"/>
<dbReference type="PDBsum" id="1I84"/>
<dbReference type="PDBsum" id="3DTP"/>
<dbReference type="PDBsum" id="3J04"/>
<dbReference type="PDBsum" id="5M05"/>
<dbReference type="PDBsum" id="5T45"/>
<dbReference type="PDBsum" id="6BIH"/>
<dbReference type="PDBsum" id="7MF3"/>
<dbReference type="PDBsum" id="8SYF"/>
<dbReference type="EMDB" id="EMD-23810"/>
<dbReference type="EMDB" id="EMD-29646"/>
<dbReference type="EMDB" id="EMD-7100"/>
<dbReference type="SMR" id="P10587"/>
<dbReference type="FunCoup" id="P10587">
    <property type="interactions" value="773"/>
</dbReference>
<dbReference type="IntAct" id="P10587">
    <property type="interactions" value="1"/>
</dbReference>
<dbReference type="STRING" id="9031.ENSGALP00000046782"/>
<dbReference type="PaxDb" id="9031-ENSGALP00000010520"/>
<dbReference type="GeneID" id="396211"/>
<dbReference type="VEuPathDB" id="HostDB:geneid_396211"/>
<dbReference type="eggNOG" id="KOG0161">
    <property type="taxonomic scope" value="Eukaryota"/>
</dbReference>
<dbReference type="InParanoid" id="P10587"/>
<dbReference type="OMA" id="QARITNM"/>
<dbReference type="OrthoDB" id="10254995at2759"/>
<dbReference type="PhylomeDB" id="P10587"/>
<dbReference type="TreeFam" id="TF333601"/>
<dbReference type="SABIO-RK" id="P10587"/>
<dbReference type="EvolutionaryTrace" id="P10587"/>
<dbReference type="Proteomes" id="UP000000539">
    <property type="component" value="Unassembled WGS sequence"/>
</dbReference>
<dbReference type="GO" id="GO:0005737">
    <property type="term" value="C:cytoplasm"/>
    <property type="evidence" value="ECO:0000318"/>
    <property type="project" value="GO_Central"/>
</dbReference>
<dbReference type="GO" id="GO:0005859">
    <property type="term" value="C:muscle myosin complex"/>
    <property type="evidence" value="ECO:0000315"/>
    <property type="project" value="CAFA"/>
</dbReference>
<dbReference type="GO" id="GO:0030016">
    <property type="term" value="C:myofibril"/>
    <property type="evidence" value="ECO:0007669"/>
    <property type="project" value="UniProtKB-SubCell"/>
</dbReference>
<dbReference type="GO" id="GO:0032982">
    <property type="term" value="C:myosin filament"/>
    <property type="evidence" value="ECO:0000318"/>
    <property type="project" value="GO_Central"/>
</dbReference>
<dbReference type="GO" id="GO:0016460">
    <property type="term" value="C:myosin II complex"/>
    <property type="evidence" value="ECO:0000318"/>
    <property type="project" value="GO_Central"/>
</dbReference>
<dbReference type="GO" id="GO:0003779">
    <property type="term" value="F:actin binding"/>
    <property type="evidence" value="ECO:0000315"/>
    <property type="project" value="CAFA"/>
</dbReference>
<dbReference type="GO" id="GO:0051015">
    <property type="term" value="F:actin filament binding"/>
    <property type="evidence" value="ECO:0000318"/>
    <property type="project" value="GO_Central"/>
</dbReference>
<dbReference type="GO" id="GO:0043531">
    <property type="term" value="F:ADP binding"/>
    <property type="evidence" value="ECO:0000315"/>
    <property type="project" value="CAFA"/>
</dbReference>
<dbReference type="GO" id="GO:0005524">
    <property type="term" value="F:ATP binding"/>
    <property type="evidence" value="ECO:0000315"/>
    <property type="project" value="CAFA"/>
</dbReference>
<dbReference type="GO" id="GO:0005516">
    <property type="term" value="F:calmodulin binding"/>
    <property type="evidence" value="ECO:0007669"/>
    <property type="project" value="UniProtKB-KW"/>
</dbReference>
<dbReference type="GO" id="GO:0000287">
    <property type="term" value="F:magnesium ion binding"/>
    <property type="evidence" value="ECO:0000315"/>
    <property type="project" value="CAFA"/>
</dbReference>
<dbReference type="GO" id="GO:0000146">
    <property type="term" value="F:microfilament motor activity"/>
    <property type="evidence" value="ECO:0000315"/>
    <property type="project" value="CAFA"/>
</dbReference>
<dbReference type="GO" id="GO:0045159">
    <property type="term" value="F:myosin II binding"/>
    <property type="evidence" value="ECO:0000353"/>
    <property type="project" value="CAFA"/>
</dbReference>
<dbReference type="GO" id="GO:0032027">
    <property type="term" value="F:myosin light chain binding"/>
    <property type="evidence" value="ECO:0000353"/>
    <property type="project" value="CAFA"/>
</dbReference>
<dbReference type="GO" id="GO:0008307">
    <property type="term" value="F:structural constituent of muscle"/>
    <property type="evidence" value="ECO:0000315"/>
    <property type="project" value="CAFA"/>
</dbReference>
<dbReference type="GO" id="GO:0031032">
    <property type="term" value="P:actomyosin structure organization"/>
    <property type="evidence" value="ECO:0000318"/>
    <property type="project" value="GO_Central"/>
</dbReference>
<dbReference type="GO" id="GO:0055013">
    <property type="term" value="P:cardiac muscle cell development"/>
    <property type="evidence" value="ECO:0000250"/>
    <property type="project" value="UniProtKB"/>
</dbReference>
<dbReference type="GO" id="GO:0048251">
    <property type="term" value="P:elastic fiber assembly"/>
    <property type="evidence" value="ECO:0000250"/>
    <property type="project" value="UniProtKB"/>
</dbReference>
<dbReference type="GO" id="GO:0030239">
    <property type="term" value="P:myofibril assembly"/>
    <property type="evidence" value="ECO:0000315"/>
    <property type="project" value="CAFA"/>
</dbReference>
<dbReference type="GO" id="GO:0030241">
    <property type="term" value="P:skeletal muscle myosin thick filament assembly"/>
    <property type="evidence" value="ECO:0000250"/>
    <property type="project" value="UniProtKB"/>
</dbReference>
<dbReference type="GO" id="GO:0006939">
    <property type="term" value="P:smooth muscle contraction"/>
    <property type="evidence" value="ECO:0000250"/>
    <property type="project" value="UniProtKB"/>
</dbReference>
<dbReference type="CDD" id="cd14921">
    <property type="entry name" value="MYSc_Myh11"/>
    <property type="match status" value="1"/>
</dbReference>
<dbReference type="DisProt" id="DP00102"/>
<dbReference type="FunFam" id="2.30.30.360:FF:000001">
    <property type="entry name" value="Myosin heavy chain"/>
    <property type="match status" value="1"/>
</dbReference>
<dbReference type="FunFam" id="3.30.70.1590:FF:000001">
    <property type="entry name" value="Myosin heavy chain"/>
    <property type="match status" value="1"/>
</dbReference>
<dbReference type="FunFam" id="1.10.10.820:FF:000002">
    <property type="entry name" value="Myosin heavy chain 10"/>
    <property type="match status" value="1"/>
</dbReference>
<dbReference type="FunFam" id="1.20.120.720:FF:000002">
    <property type="entry name" value="Myosin heavy chain 10"/>
    <property type="match status" value="1"/>
</dbReference>
<dbReference type="FunFam" id="1.20.5.4820:FF:000002">
    <property type="entry name" value="Myosin heavy chain 10"/>
    <property type="match status" value="1"/>
</dbReference>
<dbReference type="FunFam" id="1.20.58.530:FF:000003">
    <property type="entry name" value="Myosin heavy chain 10"/>
    <property type="match status" value="1"/>
</dbReference>
<dbReference type="FunFam" id="1.20.5.340:FF:000008">
    <property type="entry name" value="Myosin heavy chain 11"/>
    <property type="match status" value="1"/>
</dbReference>
<dbReference type="FunFam" id="1.20.5.340:FF:000007">
    <property type="entry name" value="Myosin heavy chain, non-muscle"/>
    <property type="match status" value="1"/>
</dbReference>
<dbReference type="FunFam" id="4.10.270.10:FF:000001">
    <property type="entry name" value="Myosin heavy chain, non-muscle"/>
    <property type="match status" value="1"/>
</dbReference>
<dbReference type="FunFam" id="1.20.5.340:FF:000017">
    <property type="entry name" value="myosin-10 isoform X2"/>
    <property type="match status" value="1"/>
</dbReference>
<dbReference type="FunFam" id="1.20.5.340:FF:000009">
    <property type="entry name" value="myosin-11 isoform X2"/>
    <property type="match status" value="1"/>
</dbReference>
<dbReference type="FunFam" id="3.40.850.10:FF:000101">
    <property type="entry name" value="Slow myosin heavy chain 2"/>
    <property type="match status" value="1"/>
</dbReference>
<dbReference type="Gene3D" id="1.10.10.820">
    <property type="match status" value="1"/>
</dbReference>
<dbReference type="Gene3D" id="1.20.5.340">
    <property type="match status" value="5"/>
</dbReference>
<dbReference type="Gene3D" id="1.20.5.370">
    <property type="match status" value="1"/>
</dbReference>
<dbReference type="Gene3D" id="1.20.58.530">
    <property type="match status" value="1"/>
</dbReference>
<dbReference type="Gene3D" id="3.30.70.1590">
    <property type="match status" value="1"/>
</dbReference>
<dbReference type="Gene3D" id="6.10.250.2420">
    <property type="match status" value="1"/>
</dbReference>
<dbReference type="Gene3D" id="3.40.850.10">
    <property type="entry name" value="Kinesin motor domain"/>
    <property type="match status" value="1"/>
</dbReference>
<dbReference type="Gene3D" id="2.30.30.360">
    <property type="entry name" value="Myosin S1 fragment, N-terminal"/>
    <property type="match status" value="1"/>
</dbReference>
<dbReference type="Gene3D" id="1.20.120.720">
    <property type="entry name" value="Myosin VI head, motor domain, U50 subdomain"/>
    <property type="match status" value="1"/>
</dbReference>
<dbReference type="Gene3D" id="4.10.270.10">
    <property type="entry name" value="Myosin, subunit A"/>
    <property type="match status" value="1"/>
</dbReference>
<dbReference type="InterPro" id="IPR000048">
    <property type="entry name" value="IQ_motif_EF-hand-BS"/>
</dbReference>
<dbReference type="InterPro" id="IPR036961">
    <property type="entry name" value="Kinesin_motor_dom_sf"/>
</dbReference>
<dbReference type="InterPro" id="IPR001609">
    <property type="entry name" value="Myosin_head_motor_dom-like"/>
</dbReference>
<dbReference type="InterPro" id="IPR004009">
    <property type="entry name" value="Myosin_N"/>
</dbReference>
<dbReference type="InterPro" id="IPR008989">
    <property type="entry name" value="Myosin_S1_N"/>
</dbReference>
<dbReference type="InterPro" id="IPR002928">
    <property type="entry name" value="Myosin_tail"/>
</dbReference>
<dbReference type="InterPro" id="IPR027417">
    <property type="entry name" value="P-loop_NTPase"/>
</dbReference>
<dbReference type="InterPro" id="IPR014751">
    <property type="entry name" value="XRCC4-like_C"/>
</dbReference>
<dbReference type="PANTHER" id="PTHR45615">
    <property type="entry name" value="MYOSIN HEAVY CHAIN, NON-MUSCLE"/>
    <property type="match status" value="1"/>
</dbReference>
<dbReference type="PANTHER" id="PTHR45615:SF23">
    <property type="entry name" value="MYOSIN-11"/>
    <property type="match status" value="1"/>
</dbReference>
<dbReference type="Pfam" id="PF00063">
    <property type="entry name" value="Myosin_head"/>
    <property type="match status" value="1"/>
</dbReference>
<dbReference type="Pfam" id="PF02736">
    <property type="entry name" value="Myosin_N"/>
    <property type="match status" value="1"/>
</dbReference>
<dbReference type="Pfam" id="PF01576">
    <property type="entry name" value="Myosin_tail_1"/>
    <property type="match status" value="1"/>
</dbReference>
<dbReference type="PRINTS" id="PR00193">
    <property type="entry name" value="MYOSINHEAVY"/>
</dbReference>
<dbReference type="SMART" id="SM00015">
    <property type="entry name" value="IQ"/>
    <property type="match status" value="1"/>
</dbReference>
<dbReference type="SMART" id="SM00242">
    <property type="entry name" value="MYSc"/>
    <property type="match status" value="1"/>
</dbReference>
<dbReference type="SUPFAM" id="SSF90257">
    <property type="entry name" value="Myosin rod fragments"/>
    <property type="match status" value="6"/>
</dbReference>
<dbReference type="SUPFAM" id="SSF52540">
    <property type="entry name" value="P-loop containing nucleoside triphosphate hydrolases"/>
    <property type="match status" value="1"/>
</dbReference>
<dbReference type="PROSITE" id="PS50096">
    <property type="entry name" value="IQ"/>
    <property type="match status" value="1"/>
</dbReference>
<dbReference type="PROSITE" id="PS51456">
    <property type="entry name" value="MYOSIN_MOTOR"/>
    <property type="match status" value="1"/>
</dbReference>
<dbReference type="PROSITE" id="PS51844">
    <property type="entry name" value="SH3_LIKE"/>
    <property type="match status" value="1"/>
</dbReference>
<feature type="initiator methionine" description="Removed" evidence="6">
    <location>
        <position position="1"/>
    </location>
</feature>
<feature type="chain" id="PRO_0000123429" description="Myosin-11">
    <location>
        <begin position="2"/>
        <end position="1979"/>
    </location>
</feature>
<feature type="domain" description="Myosin N-terminal SH3-like" evidence="4">
    <location>
        <begin position="30"/>
        <end position="80"/>
    </location>
</feature>
<feature type="domain" description="Myosin motor" evidence="3">
    <location>
        <begin position="84"/>
        <end position="789"/>
    </location>
</feature>
<feature type="domain" description="IQ" evidence="2">
    <location>
        <begin position="792"/>
        <end position="821"/>
    </location>
</feature>
<feature type="region of interest" description="Actin-binding">
    <location>
        <begin position="667"/>
        <end position="689"/>
    </location>
</feature>
<feature type="region of interest" description="Actin-binding">
    <location>
        <begin position="768"/>
        <end position="782"/>
    </location>
</feature>
<feature type="region of interest" description="Rodlike tail (S2 and LMM domains)">
    <location>
        <begin position="850"/>
        <end position="1979"/>
    </location>
</feature>
<feature type="region of interest" description="Disordered" evidence="5">
    <location>
        <begin position="1130"/>
        <end position="1150"/>
    </location>
</feature>
<feature type="region of interest" description="Disordered" evidence="5">
    <location>
        <begin position="1709"/>
        <end position="1736"/>
    </location>
</feature>
<feature type="region of interest" description="Disordered" evidence="5">
    <location>
        <begin position="1891"/>
        <end position="1979"/>
    </location>
</feature>
<feature type="coiled-coil region" evidence="1">
    <location>
        <begin position="850"/>
        <end position="1979"/>
    </location>
</feature>
<feature type="compositionally biased region" description="Basic and acidic residues" evidence="5">
    <location>
        <begin position="1135"/>
        <end position="1150"/>
    </location>
</feature>
<feature type="compositionally biased region" description="Basic and acidic residues" evidence="5">
    <location>
        <begin position="1968"/>
        <end position="1979"/>
    </location>
</feature>
<feature type="binding site">
    <location>
        <begin position="177"/>
        <end position="184"/>
    </location>
    <ligand>
        <name>ATP</name>
        <dbReference type="ChEBI" id="CHEBI:30616"/>
    </ligand>
</feature>
<feature type="modified residue" description="Blocked amino end (Ser)" evidence="6">
    <location>
        <position position="2"/>
    </location>
</feature>
<feature type="modified residue" description="N6,N6,N6-trimethyllysine" evidence="6">
    <location>
        <position position="128"/>
    </location>
</feature>
<feature type="sequence conflict" description="In Ref. 1; CAA29793." evidence="7" ref="1">
    <original>KDTSITQGPSFS</original>
    <variation>RTPASLKVHLFP</variation>
    <location>
        <begin position="205"/>
        <end position="216"/>
    </location>
</feature>
<feature type="helix" evidence="8">
    <location>
        <begin position="10"/>
        <end position="12"/>
    </location>
</feature>
<feature type="helix" evidence="8">
    <location>
        <begin position="23"/>
        <end position="28"/>
    </location>
</feature>
<feature type="strand" evidence="10">
    <location>
        <begin position="34"/>
        <end position="39"/>
    </location>
</feature>
<feature type="turn" evidence="10">
    <location>
        <begin position="40"/>
        <end position="42"/>
    </location>
</feature>
<feature type="strand" evidence="10">
    <location>
        <begin position="43"/>
        <end position="53"/>
    </location>
</feature>
<feature type="strand" evidence="10">
    <location>
        <begin position="56"/>
        <end position="61"/>
    </location>
</feature>
<feature type="turn" evidence="10">
    <location>
        <begin position="62"/>
        <end position="64"/>
    </location>
</feature>
<feature type="strand" evidence="10">
    <location>
        <begin position="67"/>
        <end position="71"/>
    </location>
</feature>
<feature type="helix" evidence="10">
    <location>
        <begin position="72"/>
        <end position="74"/>
    </location>
</feature>
<feature type="helix" evidence="10">
    <location>
        <begin position="81"/>
        <end position="83"/>
    </location>
</feature>
<feature type="helix" evidence="10">
    <location>
        <begin position="89"/>
        <end position="91"/>
    </location>
</feature>
<feature type="helix" evidence="10">
    <location>
        <begin position="97"/>
        <end position="109"/>
    </location>
</feature>
<feature type="strand" evidence="10">
    <location>
        <begin position="114"/>
        <end position="116"/>
    </location>
</feature>
<feature type="strand" evidence="10">
    <location>
        <begin position="118"/>
        <end position="124"/>
    </location>
</feature>
<feature type="helix" evidence="11">
    <location>
        <begin position="131"/>
        <end position="133"/>
    </location>
</feature>
<feature type="helix" evidence="10">
    <location>
        <begin position="135"/>
        <end position="141"/>
    </location>
</feature>
<feature type="helix" evidence="10">
    <location>
        <begin position="146"/>
        <end position="148"/>
    </location>
</feature>
<feature type="helix" evidence="10">
    <location>
        <begin position="153"/>
        <end position="167"/>
    </location>
</feature>
<feature type="strand" evidence="10">
    <location>
        <begin position="171"/>
        <end position="176"/>
    </location>
</feature>
<feature type="helix" evidence="10">
    <location>
        <begin position="183"/>
        <end position="197"/>
    </location>
</feature>
<feature type="helix" evidence="10">
    <location>
        <begin position="219"/>
        <end position="224"/>
    </location>
</feature>
<feature type="helix" evidence="10">
    <location>
        <begin position="227"/>
        <end position="235"/>
    </location>
</feature>
<feature type="strand" evidence="8">
    <location>
        <begin position="236"/>
        <end position="239"/>
    </location>
</feature>
<feature type="strand" evidence="10">
    <location>
        <begin position="245"/>
        <end position="256"/>
    </location>
</feature>
<feature type="strand" evidence="12">
    <location>
        <begin position="258"/>
        <end position="260"/>
    </location>
</feature>
<feature type="strand" evidence="10">
    <location>
        <begin position="262"/>
        <end position="270"/>
    </location>
</feature>
<feature type="helix" evidence="10">
    <location>
        <begin position="274"/>
        <end position="277"/>
    </location>
</feature>
<feature type="helix" evidence="10">
    <location>
        <begin position="288"/>
        <end position="296"/>
    </location>
</feature>
<feature type="helix" evidence="10">
    <location>
        <begin position="299"/>
        <end position="304"/>
    </location>
</feature>
<feature type="helix" evidence="10">
    <location>
        <begin position="310"/>
        <end position="312"/>
    </location>
</feature>
<feature type="strand" evidence="12">
    <location>
        <begin position="314"/>
        <end position="316"/>
    </location>
</feature>
<feature type="helix" evidence="10">
    <location>
        <begin position="328"/>
        <end position="342"/>
    </location>
</feature>
<feature type="helix" evidence="10">
    <location>
        <begin position="346"/>
        <end position="362"/>
    </location>
</feature>
<feature type="strand" evidence="12">
    <location>
        <begin position="371"/>
        <end position="374"/>
    </location>
</feature>
<feature type="strand" evidence="10">
    <location>
        <begin position="375"/>
        <end position="377"/>
    </location>
</feature>
<feature type="helix" evidence="10">
    <location>
        <begin position="382"/>
        <end position="391"/>
    </location>
</feature>
<feature type="helix" evidence="10">
    <location>
        <begin position="395"/>
        <end position="403"/>
    </location>
</feature>
<feature type="strand" evidence="11">
    <location>
        <begin position="406"/>
        <end position="408"/>
    </location>
</feature>
<feature type="strand" evidence="10">
    <location>
        <begin position="410"/>
        <end position="414"/>
    </location>
</feature>
<feature type="helix" evidence="10">
    <location>
        <begin position="420"/>
        <end position="450"/>
    </location>
</feature>
<feature type="turn" evidence="11">
    <location>
        <begin position="451"/>
        <end position="453"/>
    </location>
</feature>
<feature type="strand" evidence="10">
    <location>
        <begin position="458"/>
        <end position="465"/>
    </location>
</feature>
<feature type="strand" evidence="9">
    <location>
        <begin position="473"/>
        <end position="475"/>
    </location>
</feature>
<feature type="helix" evidence="10">
    <location>
        <begin position="477"/>
        <end position="506"/>
    </location>
</feature>
<feature type="helix" evidence="10">
    <location>
        <begin position="517"/>
        <end position="521"/>
    </location>
</feature>
<feature type="helix" evidence="10">
    <location>
        <begin position="522"/>
        <end position="529"/>
    </location>
</feature>
<feature type="strand" evidence="10">
    <location>
        <begin position="532"/>
        <end position="534"/>
    </location>
</feature>
<feature type="helix" evidence="10">
    <location>
        <begin position="537"/>
        <end position="545"/>
    </location>
</feature>
<feature type="helix" evidence="10">
    <location>
        <begin position="552"/>
        <end position="563"/>
    </location>
</feature>
<feature type="strand" evidence="9">
    <location>
        <begin position="569"/>
        <end position="571"/>
    </location>
</feature>
<feature type="turn" evidence="8">
    <location>
        <begin position="576"/>
        <end position="578"/>
    </location>
</feature>
<feature type="strand" evidence="10">
    <location>
        <begin position="580"/>
        <end position="585"/>
    </location>
</feature>
<feature type="strand" evidence="10">
    <location>
        <begin position="588"/>
        <end position="593"/>
    </location>
</feature>
<feature type="helix" evidence="10">
    <location>
        <begin position="597"/>
        <end position="602"/>
    </location>
</feature>
<feature type="helix" evidence="10">
    <location>
        <begin position="607"/>
        <end position="614"/>
    </location>
</feature>
<feature type="helix" evidence="10">
    <location>
        <begin position="619"/>
        <end position="624"/>
    </location>
</feature>
<feature type="strand" evidence="12">
    <location>
        <begin position="654"/>
        <end position="656"/>
    </location>
</feature>
<feature type="helix" evidence="10">
    <location>
        <begin position="659"/>
        <end position="675"/>
    </location>
</feature>
<feature type="strand" evidence="10">
    <location>
        <begin position="677"/>
        <end position="685"/>
    </location>
</feature>
<feature type="helix" evidence="10">
    <location>
        <begin position="698"/>
        <end position="707"/>
    </location>
</feature>
<feature type="helix" evidence="10">
    <location>
        <begin position="710"/>
        <end position="718"/>
    </location>
</feature>
<feature type="strand" evidence="10">
    <location>
        <begin position="723"/>
        <end position="726"/>
    </location>
</feature>
<feature type="helix" evidence="10">
    <location>
        <begin position="727"/>
        <end position="734"/>
    </location>
</feature>
<feature type="turn" evidence="11">
    <location>
        <begin position="735"/>
        <end position="737"/>
    </location>
</feature>
<feature type="strand" evidence="10">
    <location>
        <begin position="740"/>
        <end position="742"/>
    </location>
</feature>
<feature type="helix" evidence="10">
    <location>
        <begin position="749"/>
        <end position="758"/>
    </location>
</feature>
<feature type="turn" evidence="10">
    <location>
        <begin position="759"/>
        <end position="761"/>
    </location>
</feature>
<feature type="strand" evidence="10">
    <location>
        <begin position="766"/>
        <end position="769"/>
    </location>
</feature>
<feature type="strand" evidence="10">
    <location>
        <begin position="771"/>
        <end position="776"/>
    </location>
</feature>
<feature type="turn" evidence="10">
    <location>
        <begin position="778"/>
        <end position="784"/>
    </location>
</feature>
<feature type="helix" evidence="12">
    <location>
        <begin position="785"/>
        <end position="791"/>
    </location>
</feature>
<feature type="helix" evidence="12">
    <location>
        <begin position="793"/>
        <end position="839"/>
    </location>
</feature>
<feature type="helix" evidence="12">
    <location>
        <begin position="841"/>
        <end position="845"/>
    </location>
</feature>
<feature type="helix" evidence="12">
    <location>
        <begin position="848"/>
        <end position="853"/>
    </location>
</feature>
<feature type="helix" evidence="12">
    <location>
        <begin position="855"/>
        <end position="948"/>
    </location>
</feature>
<feature type="helix" evidence="12">
    <location>
        <begin position="1414"/>
        <end position="1526"/>
    </location>
</feature>
<feature type="strand" evidence="12">
    <location>
        <begin position="1528"/>
        <end position="1530"/>
    </location>
</feature>
<feature type="helix" evidence="12">
    <location>
        <begin position="1533"/>
        <end position="1622"/>
    </location>
</feature>
<keyword id="KW-0002">3D-structure</keyword>
<keyword id="KW-0009">Actin-binding</keyword>
<keyword id="KW-0067">ATP-binding</keyword>
<keyword id="KW-0112">Calmodulin-binding</keyword>
<keyword id="KW-0175">Coiled coil</keyword>
<keyword id="KW-0963">Cytoplasm</keyword>
<keyword id="KW-0903">Direct protein sequencing</keyword>
<keyword id="KW-0488">Methylation</keyword>
<keyword id="KW-0505">Motor protein</keyword>
<keyword id="KW-0514">Muscle protein</keyword>
<keyword id="KW-0518">Myosin</keyword>
<keyword id="KW-0547">Nucleotide-binding</keyword>
<keyword id="KW-1185">Reference proteome</keyword>
<keyword id="KW-0787">Thick filament</keyword>
<proteinExistence type="evidence at protein level"/>
<name>MYH11_CHICK</name>
<accession>P10587</accession>
<organism>
    <name type="scientific">Gallus gallus</name>
    <name type="common">Chicken</name>
    <dbReference type="NCBI Taxonomy" id="9031"/>
    <lineage>
        <taxon>Eukaryota</taxon>
        <taxon>Metazoa</taxon>
        <taxon>Chordata</taxon>
        <taxon>Craniata</taxon>
        <taxon>Vertebrata</taxon>
        <taxon>Euteleostomi</taxon>
        <taxon>Archelosauria</taxon>
        <taxon>Archosauria</taxon>
        <taxon>Dinosauria</taxon>
        <taxon>Saurischia</taxon>
        <taxon>Theropoda</taxon>
        <taxon>Coelurosauria</taxon>
        <taxon>Aves</taxon>
        <taxon>Neognathae</taxon>
        <taxon>Galloanserae</taxon>
        <taxon>Galliformes</taxon>
        <taxon>Phasianidae</taxon>
        <taxon>Phasianinae</taxon>
        <taxon>Gallus</taxon>
    </lineage>
</organism>
<comment type="function">
    <text>Muscle contraction.</text>
</comment>
<comment type="subunit">
    <text>Muscle myosin is a hexameric protein that consists of 2 heavy chain subunits (MHC), 2 alkali light chain subunits (MLC) and 2 regulatory light chain subunits (MLC-2).</text>
</comment>
<comment type="interaction">
    <interactant intactId="EBI-1027098">
        <id>P10587</id>
    </interactant>
    <interactant intactId="EBI-1027073">
        <id>P02607</id>
        <label>MYL6</label>
    </interactant>
    <organismsDiffer>false</organismsDiffer>
    <experiments>2</experiments>
</comment>
<comment type="subcellular location">
    <subcellularLocation>
        <location>Cytoplasm</location>
        <location>Myofibril</location>
    </subcellularLocation>
    <text>Thick filaments of the myofibrils.</text>
</comment>
<comment type="domain">
    <text>The rodlike tail sequence is highly repetitive, showing cycles of a 28-residue repeat pattern composed of 4 heptapeptides, characteristic for alpha-helical coiled coils.</text>
</comment>
<comment type="domain">
    <text evidence="7">Limited proteolysis of myosin heavy chain produces 1 light meromyosin (LMM) and 1 heavy meromyosin (HMM). HMM can be further cleaved into 2 globular subfragments (S1) and 1 rod-shaped subfragment (S2).</text>
</comment>
<comment type="similarity">
    <text evidence="7">Belongs to the TRAFAC class myosin-kinesin ATPase superfamily. Myosin family.</text>
</comment>
<gene>
    <name type="primary">MYH11</name>
</gene>